<reference key="1">
    <citation type="journal article" date="1998" name="Biotechnol. Lett.">
        <title>Cloning and nucleotide sequence of the endoinulinase-encoding gene, inu2, from Aspergillus ficuum.</title>
        <authorList>
            <person name="Uhm T."/>
            <person name="Chae S."/>
            <person name="Lee D."/>
            <person name="Kim S."/>
            <person name="Cassart J.-P."/>
            <person name="Vandenhaute J."/>
        </authorList>
    </citation>
    <scope>NUCLEOTIDE SEQUENCE [GENOMIC DNA]</scope>
    <source>
        <strain>ATCC 16882 / CBS 555.65 / NRRL 364</strain>
    </source>
</reference>
<reference key="2">
    <citation type="journal article" date="2013" name="FEBS Open Bio">
        <title>Asparagine 42 of the conserved endo-inulinase INU2 motif WMNDPN from Aspergillus ficuum plays a role in activity specificity.</title>
        <authorList>
            <person name="Vandamme A.M."/>
            <person name="Michaux C."/>
            <person name="Mayard A."/>
            <person name="Housen I."/>
        </authorList>
    </citation>
    <scope>FUNCTION</scope>
    <scope>SUBCELLULAR LOCATION</scope>
    <scope>CATALYTIC ACTIVITY</scope>
    <scope>MUTAGENESIS OF MET-41; ASN-42; GLU-43; GLN-59; PRO-62; TRP-67; ILE-70; PHE-99; ARG-175; ASN-265; ARG-295 AND ASP-298</scope>
</reference>
<reference key="3">
    <citation type="journal article" date="2012" name="Biochimie">
        <title>First crystal structure of an endo-inulinase, INU2, from Aspergillus ficuum: discovery of an extra-pocket in the catalytic domain responsible for its endo-activity.</title>
        <authorList>
            <person name="Pouyez J."/>
            <person name="Mayard A."/>
            <person name="Vandamme A.M."/>
            <person name="Roussel G."/>
            <person name="Perpete E.A."/>
            <person name="Wouters J."/>
            <person name="Housen I."/>
            <person name="Michaux C."/>
        </authorList>
    </citation>
    <scope>X-RAY CRYSTALLOGRAPHY (1.5 ANGSTROMS) IN COMPLEX WITH SUBSTRATE</scope>
    <scope>GLYCOSYLATION AT ASN-372</scope>
    <scope>CATALYTIC ACTIVITY</scope>
</reference>
<comment type="function">
    <text evidence="4">Endo-inulinase involved in utilization of the plant storage polymer inulin, consisting of fructooligosaccharides with a degree of polymerization (DP) value from 2 to 60.</text>
</comment>
<comment type="catalytic activity">
    <reaction evidence="3 4">
        <text>Endohydrolysis of (2-&gt;1)-beta-D-fructosidic linkages in inulin.</text>
        <dbReference type="EC" id="3.2.1.7"/>
    </reaction>
</comment>
<comment type="subcellular location">
    <subcellularLocation>
        <location evidence="4">Secreted</location>
    </subcellularLocation>
</comment>
<comment type="similarity">
    <text evidence="5">Belongs to the glycosyl hydrolase 32 family.</text>
</comment>
<sequence length="516" mass="55793">MLNPKVAYMVWMTCLGLTLPSQAQSNDYRPSYHFTPDQYWMNEPNGLIKIGSTWHLFFQHNPTANVWGNICWGHATSTDLMHWAHKPTAIADENGVEAFTGTAYYDPNNTSGLGDSANPPYLAWFTGYTTSSQTQDQRLAFSVDNGATWTKFQGNPIISTSQEAPHDITGGLESRDPKVFFHRQSGNWIMVLAHGGQDKLSFWTSADTINWTWQSDLKSTSINGLSSDITGWEVPDMFELPVEGTEETTWVVMMTPAEGSPAGGNGVLAITGSFDGKSFTADPVDASTMWLDNGRDFDGALSWVNVPASDGRRIIAAVMNSYGSNPPTTTWKGMLSFPRTLSLKKVGTQQHFVQQPITELDTISTSLQILANQTITPGQTLLSSIRGTALDVRVAFYPDAGSVLSLAVRKGASEQTVIKYTQSDATLSVDRTESGDISYDPAAGGVHTAKLEEDGTGLVSIRVLVDTCSVEVFGGQGEAVISDLIFPSDSSDGLALEVTGGNAVLQSVDVRSVSLE</sequence>
<protein>
    <recommendedName>
        <fullName>Extracellular endo-inulinase inu2</fullName>
        <ecNumber>3.2.1.7</ecNumber>
    </recommendedName>
    <alternativeName>
        <fullName>2,1-beta-D-fructanfructanohydrolase</fullName>
    </alternativeName>
    <alternativeName>
        <fullName>Inulase</fullName>
    </alternativeName>
</protein>
<proteinExistence type="evidence at protein level"/>
<name>INU2_ASPFI</name>
<keyword id="KW-0002">3D-structure</keyword>
<keyword id="KW-0119">Carbohydrate metabolism</keyword>
<keyword id="KW-0325">Glycoprotein</keyword>
<keyword id="KW-0326">Glycosidase</keyword>
<keyword id="KW-0378">Hydrolase</keyword>
<keyword id="KW-0624">Polysaccharide degradation</keyword>
<keyword id="KW-0964">Secreted</keyword>
<keyword id="KW-0732">Signal</keyword>
<feature type="signal peptide" evidence="2">
    <location>
        <begin position="1"/>
        <end position="23"/>
    </location>
</feature>
<feature type="chain" id="PRO_0000033410" description="Extracellular endo-inulinase inu2">
    <location>
        <begin position="24"/>
        <end position="516"/>
    </location>
</feature>
<feature type="active site" evidence="1">
    <location>
        <position position="43"/>
    </location>
</feature>
<feature type="binding site">
    <location>
        <begin position="41"/>
        <end position="43"/>
    </location>
    <ligand>
        <name>substrate</name>
    </ligand>
</feature>
<feature type="binding site" evidence="3">
    <location>
        <position position="61"/>
    </location>
    <ligand>
        <name>substrate</name>
    </ligand>
</feature>
<feature type="binding site" evidence="3">
    <location>
        <position position="176"/>
    </location>
    <ligand>
        <name>substrate</name>
    </ligand>
</feature>
<feature type="binding site" evidence="3">
    <location>
        <position position="320"/>
    </location>
    <ligand>
        <name>substrate</name>
    </ligand>
</feature>
<feature type="glycosylation site" description="N-linked (GlcNAc...) asparagine" evidence="2">
    <location>
        <position position="108"/>
    </location>
</feature>
<feature type="glycosylation site" description="N-linked (GlcNAc...) asparagine" evidence="2">
    <location>
        <position position="109"/>
    </location>
</feature>
<feature type="glycosylation site" description="N-linked (GlcNAc...) asparagine" evidence="2">
    <location>
        <position position="210"/>
    </location>
</feature>
<feature type="glycosylation site" description="N-linked (GlcNAc...) asparagine" evidence="3">
    <location>
        <position position="372"/>
    </location>
</feature>
<feature type="mutagenesis site" description="Decreases catalytic activity." evidence="4">
    <original>M</original>
    <variation>A</variation>
    <location>
        <position position="41"/>
    </location>
</feature>
<feature type="mutagenesis site" description="Strongly decreases catalytic activity." evidence="4">
    <original>N</original>
    <variation>G</variation>
    <location>
        <position position="42"/>
    </location>
</feature>
<feature type="mutagenesis site" description="Strongly decreases catalytic activity." evidence="4">
    <original>E</original>
    <variation>D</variation>
    <location>
        <position position="43"/>
    </location>
</feature>
<feature type="mutagenesis site" description="Impairs catalytic activity." evidence="4">
    <original>Q</original>
    <variation>A</variation>
    <location>
        <position position="59"/>
    </location>
</feature>
<feature type="mutagenesis site" description="Impairs catalytic activity." evidence="4">
    <original>P</original>
    <variation>G</variation>
    <location>
        <position position="62"/>
    </location>
</feature>
<feature type="mutagenesis site" description="Impairs catalytic activity." evidence="4">
    <original>W</original>
    <variation>A</variation>
    <location>
        <position position="67"/>
    </location>
</feature>
<feature type="mutagenesis site" description="Decreases catalytic activity." evidence="4">
    <original>I</original>
    <variation>A</variation>
    <location>
        <position position="70"/>
    </location>
</feature>
<feature type="mutagenesis site" description="Strongly decreases catalytic activity." evidence="4">
    <original>F</original>
    <variation>A</variation>
    <location>
        <position position="99"/>
    </location>
</feature>
<feature type="mutagenesis site" description="Impairs catalytic activity." evidence="4">
    <original>R</original>
    <variation>A</variation>
    <location>
        <position position="175"/>
    </location>
</feature>
<feature type="mutagenesis site" description="Decreases catalytic activity." evidence="4">
    <original>N</original>
    <variation>A</variation>
    <location>
        <position position="265"/>
    </location>
</feature>
<feature type="mutagenesis site" description="Decreases catalytic activity." evidence="4">
    <original>R</original>
    <variation>A</variation>
    <location>
        <position position="295"/>
    </location>
</feature>
<feature type="mutagenesis site" description="Decreases catalytic activity." evidence="4">
    <original>D</original>
    <variation>A</variation>
    <location>
        <position position="298"/>
    </location>
</feature>
<feature type="strand" evidence="6">
    <location>
        <begin position="31"/>
        <end position="33"/>
    </location>
</feature>
<feature type="strand" evidence="6">
    <location>
        <begin position="37"/>
        <end position="50"/>
    </location>
</feature>
<feature type="strand" evidence="6">
    <location>
        <begin position="53"/>
        <end position="61"/>
    </location>
</feature>
<feature type="strand" evidence="6">
    <location>
        <begin position="71"/>
        <end position="82"/>
    </location>
</feature>
<feature type="strand" evidence="6">
    <location>
        <begin position="84"/>
        <end position="90"/>
    </location>
</feature>
<feature type="strand" evidence="6">
    <location>
        <begin position="96"/>
        <end position="105"/>
    </location>
</feature>
<feature type="strand" evidence="6">
    <location>
        <begin position="112"/>
        <end position="114"/>
    </location>
</feature>
<feature type="strand" evidence="6">
    <location>
        <begin position="116"/>
        <end position="118"/>
    </location>
</feature>
<feature type="strand" evidence="6">
    <location>
        <begin position="121"/>
        <end position="129"/>
    </location>
</feature>
<feature type="turn" evidence="6">
    <location>
        <begin position="130"/>
        <end position="132"/>
    </location>
</feature>
<feature type="strand" evidence="6">
    <location>
        <begin position="135"/>
        <end position="144"/>
    </location>
</feature>
<feature type="helix" evidence="6">
    <location>
        <begin position="160"/>
        <end position="163"/>
    </location>
</feature>
<feature type="turn" evidence="6">
    <location>
        <begin position="164"/>
        <end position="166"/>
    </location>
</feature>
<feature type="strand" evidence="6">
    <location>
        <begin position="170"/>
        <end position="173"/>
    </location>
</feature>
<feature type="strand" evidence="6">
    <location>
        <begin position="175"/>
        <end position="182"/>
    </location>
</feature>
<feature type="turn" evidence="6">
    <location>
        <begin position="183"/>
        <end position="186"/>
    </location>
</feature>
<feature type="strand" evidence="6">
    <location>
        <begin position="187"/>
        <end position="193"/>
    </location>
</feature>
<feature type="strand" evidence="6">
    <location>
        <begin position="199"/>
        <end position="210"/>
    </location>
</feature>
<feature type="strand" evidence="6">
    <location>
        <begin position="212"/>
        <end position="218"/>
    </location>
</feature>
<feature type="helix" evidence="6">
    <location>
        <begin position="219"/>
        <end position="221"/>
    </location>
</feature>
<feature type="strand" evidence="6">
    <location>
        <begin position="236"/>
        <end position="241"/>
    </location>
</feature>
<feature type="strand" evidence="6">
    <location>
        <begin position="243"/>
        <end position="246"/>
    </location>
</feature>
<feature type="strand" evidence="6">
    <location>
        <begin position="248"/>
        <end position="254"/>
    </location>
</feature>
<feature type="strand" evidence="6">
    <location>
        <begin position="263"/>
        <end position="265"/>
    </location>
</feature>
<feature type="strand" evidence="6">
    <location>
        <begin position="268"/>
        <end position="274"/>
    </location>
</feature>
<feature type="strand" evidence="6">
    <location>
        <begin position="279"/>
        <end position="281"/>
    </location>
</feature>
<feature type="turn" evidence="6">
    <location>
        <begin position="286"/>
        <end position="288"/>
    </location>
</feature>
<feature type="strand" evidence="6">
    <location>
        <begin position="289"/>
        <end position="291"/>
    </location>
</feature>
<feature type="strand" evidence="6">
    <location>
        <begin position="293"/>
        <end position="296"/>
    </location>
</feature>
<feature type="strand" evidence="6">
    <location>
        <begin position="298"/>
        <end position="302"/>
    </location>
</feature>
<feature type="turn" evidence="6">
    <location>
        <begin position="308"/>
        <end position="310"/>
    </location>
</feature>
<feature type="strand" evidence="6">
    <location>
        <begin position="314"/>
        <end position="319"/>
    </location>
</feature>
<feature type="strand" evidence="6">
    <location>
        <begin position="329"/>
        <end position="332"/>
    </location>
</feature>
<feature type="strand" evidence="6">
    <location>
        <begin position="339"/>
        <end position="346"/>
    </location>
</feature>
<feature type="strand" evidence="6">
    <location>
        <begin position="349"/>
        <end position="356"/>
    </location>
</feature>
<feature type="helix" evidence="6">
    <location>
        <begin position="358"/>
        <end position="363"/>
    </location>
</feature>
<feature type="strand" evidence="6">
    <location>
        <begin position="364"/>
        <end position="375"/>
    </location>
</feature>
<feature type="strand" evidence="6">
    <location>
        <begin position="388"/>
        <end position="398"/>
    </location>
</feature>
<feature type="strand" evidence="6">
    <location>
        <begin position="403"/>
        <end position="410"/>
    </location>
</feature>
<feature type="strand" evidence="6">
    <location>
        <begin position="416"/>
        <end position="421"/>
    </location>
</feature>
<feature type="turn" evidence="6">
    <location>
        <begin position="422"/>
        <end position="425"/>
    </location>
</feature>
<feature type="strand" evidence="6">
    <location>
        <begin position="426"/>
        <end position="430"/>
    </location>
</feature>
<feature type="strand" evidence="6">
    <location>
        <begin position="443"/>
        <end position="450"/>
    </location>
</feature>
<feature type="strand" evidence="6">
    <location>
        <begin position="459"/>
        <end position="466"/>
    </location>
</feature>
<feature type="strand" evidence="6">
    <location>
        <begin position="469"/>
        <end position="474"/>
    </location>
</feature>
<feature type="turn" evidence="6">
    <location>
        <begin position="475"/>
        <end position="478"/>
    </location>
</feature>
<feature type="strand" evidence="6">
    <location>
        <begin position="479"/>
        <end position="484"/>
    </location>
</feature>
<feature type="strand" evidence="6">
    <location>
        <begin position="493"/>
        <end position="501"/>
    </location>
</feature>
<feature type="strand" evidence="6">
    <location>
        <begin position="503"/>
        <end position="513"/>
    </location>
</feature>
<gene>
    <name type="primary">inu2</name>
</gene>
<evidence type="ECO:0000250" key="1"/>
<evidence type="ECO:0000255" key="2"/>
<evidence type="ECO:0000269" key="3">
    <source>
    </source>
</evidence>
<evidence type="ECO:0000269" key="4">
    <source>
    </source>
</evidence>
<evidence type="ECO:0000305" key="5"/>
<evidence type="ECO:0007829" key="6">
    <source>
        <dbReference type="PDB" id="3SC7"/>
    </source>
</evidence>
<dbReference type="EC" id="3.2.1.7"/>
<dbReference type="EMBL" id="AJ006951">
    <property type="protein sequence ID" value="CAA07345.1"/>
    <property type="molecule type" value="Genomic_DNA"/>
</dbReference>
<dbReference type="PDB" id="3RWK">
    <property type="method" value="X-ray"/>
    <property type="resolution" value="2.10 A"/>
    <property type="chains" value="X=1-516"/>
</dbReference>
<dbReference type="PDB" id="3SC7">
    <property type="method" value="X-ray"/>
    <property type="resolution" value="1.50 A"/>
    <property type="chains" value="X=1-516"/>
</dbReference>
<dbReference type="PDBsum" id="3RWK"/>
<dbReference type="PDBsum" id="3SC7"/>
<dbReference type="SMR" id="O94220"/>
<dbReference type="CAZy" id="GH32">
    <property type="family name" value="Glycoside Hydrolase Family 32"/>
</dbReference>
<dbReference type="GlyCosmos" id="O94220">
    <property type="glycosylation" value="4 sites, No reported glycans"/>
</dbReference>
<dbReference type="iPTMnet" id="O94220"/>
<dbReference type="BRENDA" id="3.2.1.7">
    <property type="organism ID" value="503"/>
</dbReference>
<dbReference type="EvolutionaryTrace" id="O94220"/>
<dbReference type="GO" id="GO:0005737">
    <property type="term" value="C:cytoplasm"/>
    <property type="evidence" value="ECO:0007669"/>
    <property type="project" value="TreeGrafter"/>
</dbReference>
<dbReference type="GO" id="GO:0005576">
    <property type="term" value="C:extracellular region"/>
    <property type="evidence" value="ECO:0007669"/>
    <property type="project" value="UniProtKB-SubCell"/>
</dbReference>
<dbReference type="GO" id="GO:0051670">
    <property type="term" value="F:inulinase activity"/>
    <property type="evidence" value="ECO:0007669"/>
    <property type="project" value="UniProtKB-EC"/>
</dbReference>
<dbReference type="GO" id="GO:0004575">
    <property type="term" value="F:sucrose alpha-glucosidase activity"/>
    <property type="evidence" value="ECO:0007669"/>
    <property type="project" value="TreeGrafter"/>
</dbReference>
<dbReference type="GO" id="GO:0000272">
    <property type="term" value="P:polysaccharide catabolic process"/>
    <property type="evidence" value="ECO:0007669"/>
    <property type="project" value="UniProtKB-KW"/>
</dbReference>
<dbReference type="GO" id="GO:0005987">
    <property type="term" value="P:sucrose catabolic process"/>
    <property type="evidence" value="ECO:0007669"/>
    <property type="project" value="TreeGrafter"/>
</dbReference>
<dbReference type="CDD" id="cd18622">
    <property type="entry name" value="GH32_Inu-like"/>
    <property type="match status" value="1"/>
</dbReference>
<dbReference type="FunFam" id="2.115.10.20:FF:000008">
    <property type="entry name" value="Extracellular endo-inulinase"/>
    <property type="match status" value="1"/>
</dbReference>
<dbReference type="FunFam" id="2.60.120.560:FF:000003">
    <property type="entry name" value="Extracellular exo-inulinase inuE"/>
    <property type="match status" value="1"/>
</dbReference>
<dbReference type="Gene3D" id="2.60.120.560">
    <property type="entry name" value="Exo-inulinase, domain 1"/>
    <property type="match status" value="1"/>
</dbReference>
<dbReference type="Gene3D" id="2.115.10.20">
    <property type="entry name" value="Glycosyl hydrolase domain, family 43"/>
    <property type="match status" value="1"/>
</dbReference>
<dbReference type="InterPro" id="IPR013320">
    <property type="entry name" value="ConA-like_dom_sf"/>
</dbReference>
<dbReference type="InterPro" id="IPR001362">
    <property type="entry name" value="Glyco_hydro_32"/>
</dbReference>
<dbReference type="InterPro" id="IPR013189">
    <property type="entry name" value="Glyco_hydro_32_C"/>
</dbReference>
<dbReference type="InterPro" id="IPR013148">
    <property type="entry name" value="Glyco_hydro_32_N"/>
</dbReference>
<dbReference type="InterPro" id="IPR023296">
    <property type="entry name" value="Glyco_hydro_beta-prop_sf"/>
</dbReference>
<dbReference type="PANTHER" id="PTHR42800">
    <property type="entry name" value="EXOINULINASE INUD (AFU_ORTHOLOGUE AFUA_5G00480)"/>
    <property type="match status" value="1"/>
</dbReference>
<dbReference type="PANTHER" id="PTHR42800:SF1">
    <property type="entry name" value="EXOINULINASE INUD (AFU_ORTHOLOGUE AFUA_5G00480)"/>
    <property type="match status" value="1"/>
</dbReference>
<dbReference type="Pfam" id="PF08244">
    <property type="entry name" value="Glyco_hydro_32C"/>
    <property type="match status" value="1"/>
</dbReference>
<dbReference type="Pfam" id="PF00251">
    <property type="entry name" value="Glyco_hydro_32N"/>
    <property type="match status" value="1"/>
</dbReference>
<dbReference type="SMART" id="SM00640">
    <property type="entry name" value="Glyco_32"/>
    <property type="match status" value="1"/>
</dbReference>
<dbReference type="SUPFAM" id="SSF75005">
    <property type="entry name" value="Arabinanase/levansucrase/invertase"/>
    <property type="match status" value="1"/>
</dbReference>
<dbReference type="SUPFAM" id="SSF49899">
    <property type="entry name" value="Concanavalin A-like lectins/glucanases"/>
    <property type="match status" value="1"/>
</dbReference>
<organism>
    <name type="scientific">Aspergillus ficuum</name>
    <dbReference type="NCBI Taxonomy" id="5058"/>
    <lineage>
        <taxon>Eukaryota</taxon>
        <taxon>Fungi</taxon>
        <taxon>Dikarya</taxon>
        <taxon>Ascomycota</taxon>
        <taxon>Pezizomycotina</taxon>
        <taxon>Eurotiomycetes</taxon>
        <taxon>Eurotiomycetidae</taxon>
        <taxon>Eurotiales</taxon>
        <taxon>Aspergillaceae</taxon>
        <taxon>Aspergillus</taxon>
    </lineage>
</organism>
<accession>O94220</accession>